<reference key="1">
    <citation type="journal article" date="2005" name="Genome Biol.">
        <title>Full-length cDNAs from chicken bursal lymphocytes to facilitate gene function analysis.</title>
        <authorList>
            <person name="Caldwell R.B."/>
            <person name="Kierzek A.M."/>
            <person name="Arakawa H."/>
            <person name="Bezzubov Y."/>
            <person name="Zaim J."/>
            <person name="Fiedler P."/>
            <person name="Kutter S."/>
            <person name="Blagodatski A."/>
            <person name="Kostovska D."/>
            <person name="Koter M."/>
            <person name="Plachy J."/>
            <person name="Carninci P."/>
            <person name="Hayashizaki Y."/>
            <person name="Buerstedde J.-M."/>
        </authorList>
    </citation>
    <scope>NUCLEOTIDE SEQUENCE [LARGE SCALE MRNA]</scope>
    <source>
        <strain>CB</strain>
        <tissue>Bursa of Fabricius</tissue>
    </source>
</reference>
<dbReference type="EMBL" id="AJ720462">
    <property type="protein sequence ID" value="CAG32121.1"/>
    <property type="molecule type" value="mRNA"/>
</dbReference>
<dbReference type="SMR" id="Q5ZJH2"/>
<dbReference type="FunCoup" id="Q5ZJH2">
    <property type="interactions" value="1572"/>
</dbReference>
<dbReference type="STRING" id="9031.ENSGALP00000046135"/>
<dbReference type="MEROPS" id="M28.978"/>
<dbReference type="GlyCosmos" id="Q5ZJH2">
    <property type="glycosylation" value="1 site, No reported glycans"/>
</dbReference>
<dbReference type="GlyGen" id="Q5ZJH2">
    <property type="glycosylation" value="1 site"/>
</dbReference>
<dbReference type="PaxDb" id="9031-ENSGALP00000021774"/>
<dbReference type="VEuPathDB" id="HostDB:geneid_426048"/>
<dbReference type="eggNOG" id="KOG2526">
    <property type="taxonomic scope" value="Eukaryota"/>
</dbReference>
<dbReference type="InParanoid" id="Q5ZJH2"/>
<dbReference type="OrthoDB" id="5913609at2759"/>
<dbReference type="PhylomeDB" id="Q5ZJH2"/>
<dbReference type="Proteomes" id="UP000000539">
    <property type="component" value="Unassembled WGS sequence"/>
</dbReference>
<dbReference type="GO" id="GO:0005789">
    <property type="term" value="C:endoplasmic reticulum membrane"/>
    <property type="evidence" value="ECO:0000318"/>
    <property type="project" value="GO_Central"/>
</dbReference>
<dbReference type="GO" id="GO:0160064">
    <property type="term" value="C:multi-pass translocon complex"/>
    <property type="evidence" value="ECO:0000250"/>
    <property type="project" value="UniProtKB"/>
</dbReference>
<dbReference type="GO" id="GO:0043022">
    <property type="term" value="F:ribosome binding"/>
    <property type="evidence" value="ECO:0000250"/>
    <property type="project" value="UniProtKB"/>
</dbReference>
<dbReference type="GO" id="GO:0160063">
    <property type="term" value="P:multi-pass transmembrane protein insertion into ER membrane"/>
    <property type="evidence" value="ECO:0000250"/>
    <property type="project" value="UniProtKB"/>
</dbReference>
<dbReference type="GO" id="GO:0009966">
    <property type="term" value="P:regulation of signal transduction"/>
    <property type="evidence" value="ECO:0000318"/>
    <property type="project" value="GO_Central"/>
</dbReference>
<dbReference type="CDD" id="cd03882">
    <property type="entry name" value="M28_nicalin_like"/>
    <property type="match status" value="1"/>
</dbReference>
<dbReference type="FunFam" id="3.40.630.10:FF:000021">
    <property type="entry name" value="Nicalin"/>
    <property type="match status" value="1"/>
</dbReference>
<dbReference type="Gene3D" id="3.40.630.10">
    <property type="entry name" value="Zn peptidases"/>
    <property type="match status" value="1"/>
</dbReference>
<dbReference type="InterPro" id="IPR016574">
    <property type="entry name" value="Nicalin"/>
</dbReference>
<dbReference type="InterPro" id="IPR007484">
    <property type="entry name" value="Peptidase_M28"/>
</dbReference>
<dbReference type="PANTHER" id="PTHR31826">
    <property type="entry name" value="NICALIN"/>
    <property type="match status" value="1"/>
</dbReference>
<dbReference type="Pfam" id="PF04389">
    <property type="entry name" value="Peptidase_M28"/>
    <property type="match status" value="1"/>
</dbReference>
<dbReference type="PIRSF" id="PIRSF011018">
    <property type="entry name" value="Nicalin"/>
    <property type="match status" value="1"/>
</dbReference>
<dbReference type="SUPFAM" id="SSF53187">
    <property type="entry name" value="Zn-dependent exopeptidases"/>
    <property type="match status" value="1"/>
</dbReference>
<comment type="function">
    <text evidence="1 2">Component of the multi-pass translocon (MPT) complex that mediates insertion of multi-pass membrane proteins into the lipid bilayer of membranes. The MPT complex takes over after the SEC61 complex: following membrane insertion of the first few transmembrane segments of proteins by the SEC61 complex, the MPT complex occludes the lateral gate of the SEC61 complex to promote insertion of subsequent transmembrane regions (By similarity). May antagonize Nodal signaling and subsequent organization of axial structures during mesodermal patterning, via its interaction with NOMO (By similarity).</text>
</comment>
<comment type="subunit">
    <text evidence="1">Component of the multi-pass translocon (MPT) complex.</text>
</comment>
<comment type="subcellular location">
    <subcellularLocation>
        <location evidence="1">Endoplasmic reticulum membrane</location>
        <topology evidence="3">Single-pass type I membrane protein</topology>
    </subcellularLocation>
</comment>
<comment type="similarity">
    <text evidence="5">Belongs to the nicastrin family.</text>
</comment>
<evidence type="ECO:0000250" key="1">
    <source>
        <dbReference type="UniProtKB" id="A0A8I3NGV2"/>
    </source>
</evidence>
<evidence type="ECO:0000250" key="2">
    <source>
        <dbReference type="UniProtKB" id="Q6NZ07"/>
    </source>
</evidence>
<evidence type="ECO:0000255" key="3"/>
<evidence type="ECO:0000256" key="4">
    <source>
        <dbReference type="SAM" id="MobiDB-lite"/>
    </source>
</evidence>
<evidence type="ECO:0000305" key="5"/>
<sequence length="562" mass="62423">MLEEAGEVLESVLKASCLPLSFLLFVPAVLLLLGPPPAAEAAHESTVYRMQQYELGGQPYGTRSAVLNTEARTVEADVLSRRCVMMRLVDFSYEQYQKALRQSAGAVVIILPRSISSVPQDVVKQFMEIEPEMLAMETIVPVYFAVEDDELLSIYEQTRAASASQGSASAAEVLLHTATANGFQMVTSGAQSKAIHDWLIPSVEGRLTGLGGEDLPTVVIVAHYDSFGVAPWLSHGADSNGSGVSVLLELARLFSRLYTYRRTHAGYNLLFFASGGGKFNYQGTKRWLEDNLDHTDSSLLQDNVAFVLCLDTLGRGNSLHLHVSKPPKEGTLQHAFLRELEMVVASQFPEVKFSMVHKKINLAEDILAWEHERFAIRRLPAFTISHLESHRDSLRNSIMDRRSQVDTKALTQEYQDHCGGFDEGHLQPNREGSTCRSADLHGSDADPGGAARISDGLAEQSAQAAQLIDKDSTFLSTLEYYMGRYLKDVKQHHVKADKRDPEFVFYDQLKQVMNAYRVKPAIFDLLLAVCIAAYLGVAYVAVQNFGLLYRMIQRLSLKTKQQ</sequence>
<accession>Q5ZJH2</accession>
<organism>
    <name type="scientific">Gallus gallus</name>
    <name type="common">Chicken</name>
    <dbReference type="NCBI Taxonomy" id="9031"/>
    <lineage>
        <taxon>Eukaryota</taxon>
        <taxon>Metazoa</taxon>
        <taxon>Chordata</taxon>
        <taxon>Craniata</taxon>
        <taxon>Vertebrata</taxon>
        <taxon>Euteleostomi</taxon>
        <taxon>Archelosauria</taxon>
        <taxon>Archosauria</taxon>
        <taxon>Dinosauria</taxon>
        <taxon>Saurischia</taxon>
        <taxon>Theropoda</taxon>
        <taxon>Coelurosauria</taxon>
        <taxon>Aves</taxon>
        <taxon>Neognathae</taxon>
        <taxon>Galloanserae</taxon>
        <taxon>Galliformes</taxon>
        <taxon>Phasianidae</taxon>
        <taxon>Phasianinae</taxon>
        <taxon>Gallus</taxon>
    </lineage>
</organism>
<feature type="signal peptide" evidence="3">
    <location>
        <begin position="1"/>
        <end position="41"/>
    </location>
</feature>
<feature type="chain" id="PRO_0000019690" description="BOS complex subunit NCLN">
    <location>
        <begin position="42"/>
        <end position="562"/>
    </location>
</feature>
<feature type="topological domain" description="Extracellular" evidence="3">
    <location>
        <begin position="42"/>
        <end position="521"/>
    </location>
</feature>
<feature type="transmembrane region" description="Helical" evidence="3">
    <location>
        <begin position="522"/>
        <end position="542"/>
    </location>
</feature>
<feature type="topological domain" description="Cytoplasmic" evidence="3">
    <location>
        <begin position="543"/>
        <end position="562"/>
    </location>
</feature>
<feature type="region of interest" description="Disordered" evidence="4">
    <location>
        <begin position="420"/>
        <end position="447"/>
    </location>
</feature>
<feature type="glycosylation site" description="N-linked (GlcNAc...) asparagine" evidence="3">
    <location>
        <position position="240"/>
    </location>
</feature>
<proteinExistence type="evidence at transcript level"/>
<gene>
    <name type="primary">NCLN</name>
    <name type="ORF">RCJMB04_18d18</name>
</gene>
<keyword id="KW-0256">Endoplasmic reticulum</keyword>
<keyword id="KW-0325">Glycoprotein</keyword>
<keyword id="KW-0472">Membrane</keyword>
<keyword id="KW-1185">Reference proteome</keyword>
<keyword id="KW-0732">Signal</keyword>
<keyword id="KW-0812">Transmembrane</keyword>
<keyword id="KW-1133">Transmembrane helix</keyword>
<name>NCLN_CHICK</name>
<protein>
    <recommendedName>
        <fullName evidence="5">BOS complex subunit NCLN</fullName>
    </recommendedName>
    <alternativeName>
        <fullName>Nicalin</fullName>
    </alternativeName>
    <alternativeName>
        <fullName>Nicastrin-like protein</fullName>
    </alternativeName>
</protein>